<accession>Q08312</accession>
<comment type="subunit">
    <text>Disulfide cross-linked either to itself or to CotY.</text>
</comment>
<comment type="interaction">
    <interactant intactId="EBI-6407123">
        <id>Q08312</id>
    </interactant>
    <interactant intactId="EBI-6407128">
        <id>Q08311</id>
        <label>cotY</label>
    </interactant>
    <organismsDiffer>false</organismsDiffer>
    <experiments>3</experiments>
</comment>
<comment type="subcellular location">
    <subcellularLocation>
        <location evidence="1">Spore coat</location>
    </subcellularLocation>
    <text>Outer coat.</text>
</comment>
<comment type="similarity">
    <text evidence="2">To B.subtilis CotY.</text>
</comment>
<keyword id="KW-1015">Disulfide bond</keyword>
<keyword id="KW-1185">Reference proteome</keyword>
<keyword id="KW-0749">Sporulation</keyword>
<sequence length="148" mass="16534">MSQKTSSCVREAVENIEDLQNAVEEDCPTGCHSKLLSVSHSLGDTVPFAIFTSKSTPLVAFGNVGELDNGPCFNTVFFRVERVHGSCATLSLLIAFDEHKHILDFTDKDTVCEVFRLEKTNYCIEVDLDCFCAINCLNPRLINRTHHH</sequence>
<organism>
    <name type="scientific">Bacillus subtilis (strain 168)</name>
    <dbReference type="NCBI Taxonomy" id="224308"/>
    <lineage>
        <taxon>Bacteria</taxon>
        <taxon>Bacillati</taxon>
        <taxon>Bacillota</taxon>
        <taxon>Bacilli</taxon>
        <taxon>Bacillales</taxon>
        <taxon>Bacillaceae</taxon>
        <taxon>Bacillus</taxon>
    </lineage>
</organism>
<evidence type="ECO:0000269" key="1">
    <source>
    </source>
</evidence>
<evidence type="ECO:0000305" key="2"/>
<name>COTZ_BACSU</name>
<proteinExistence type="evidence at protein level"/>
<feature type="chain" id="PRO_0000079274" description="Spore coat protein Z">
    <location>
        <begin position="1"/>
        <end position="148"/>
    </location>
</feature>
<protein>
    <recommendedName>
        <fullName>Spore coat protein Z</fullName>
    </recommendedName>
</protein>
<dbReference type="EMBL" id="L10116">
    <property type="protein sequence ID" value="AAA22329.1"/>
    <property type="molecule type" value="Genomic_DNA"/>
</dbReference>
<dbReference type="EMBL" id="AL009126">
    <property type="protein sequence ID" value="CAB13031.1"/>
    <property type="molecule type" value="Genomic_DNA"/>
</dbReference>
<dbReference type="PIR" id="E47119">
    <property type="entry name" value="E47119"/>
</dbReference>
<dbReference type="RefSeq" id="NP_389056.1">
    <property type="nucleotide sequence ID" value="NC_000964.3"/>
</dbReference>
<dbReference type="RefSeq" id="WP_003244982.1">
    <property type="nucleotide sequence ID" value="NZ_OZ025638.1"/>
</dbReference>
<dbReference type="FunCoup" id="Q08312">
    <property type="interactions" value="72"/>
</dbReference>
<dbReference type="IntAct" id="Q08312">
    <property type="interactions" value="1"/>
</dbReference>
<dbReference type="STRING" id="224308.BSU11740"/>
<dbReference type="PaxDb" id="224308-BSU11740"/>
<dbReference type="EnsemblBacteria" id="CAB13031">
    <property type="protein sequence ID" value="CAB13031"/>
    <property type="gene ID" value="BSU_11740"/>
</dbReference>
<dbReference type="GeneID" id="936418"/>
<dbReference type="KEGG" id="bsu:BSU11740"/>
<dbReference type="PATRIC" id="fig|224308.179.peg.1263"/>
<dbReference type="eggNOG" id="ENOG502ZCJP">
    <property type="taxonomic scope" value="Bacteria"/>
</dbReference>
<dbReference type="InParanoid" id="Q08312"/>
<dbReference type="OrthoDB" id="1655185at2"/>
<dbReference type="PhylomeDB" id="Q08312"/>
<dbReference type="BioCyc" id="BSUB:BSU11740-MONOMER"/>
<dbReference type="Proteomes" id="UP000001570">
    <property type="component" value="Chromosome"/>
</dbReference>
<dbReference type="GO" id="GO:0030435">
    <property type="term" value="P:sporulation resulting in formation of a cellular spore"/>
    <property type="evidence" value="ECO:0007669"/>
    <property type="project" value="UniProtKB-KW"/>
</dbReference>
<dbReference type="InterPro" id="IPR019593">
    <property type="entry name" value="Spore_coat_protein_Z/Y"/>
</dbReference>
<dbReference type="Pfam" id="PF10612">
    <property type="entry name" value="Spore-coat_CotZ"/>
    <property type="match status" value="1"/>
</dbReference>
<reference key="1">
    <citation type="journal article" date="1993" name="J. Bacteriol.">
        <title>Cloning and characterization of a cluster of genes encoding polypeptides present in the insoluble fraction of the spore coat of Bacillus subtilis.</title>
        <authorList>
            <person name="Zhang J."/>
            <person name="Fitz-James P.C."/>
            <person name="Aronson A.I."/>
        </authorList>
    </citation>
    <scope>NUCLEOTIDE SEQUENCE [GENOMIC DNA]</scope>
    <scope>SUBCELLULAR LOCATION</scope>
    <source>
        <strain>168 / JH642</strain>
    </source>
</reference>
<reference key="2">
    <citation type="journal article" date="1997" name="Nature">
        <title>The complete genome sequence of the Gram-positive bacterium Bacillus subtilis.</title>
        <authorList>
            <person name="Kunst F."/>
            <person name="Ogasawara N."/>
            <person name="Moszer I."/>
            <person name="Albertini A.M."/>
            <person name="Alloni G."/>
            <person name="Azevedo V."/>
            <person name="Bertero M.G."/>
            <person name="Bessieres P."/>
            <person name="Bolotin A."/>
            <person name="Borchert S."/>
            <person name="Borriss R."/>
            <person name="Boursier L."/>
            <person name="Brans A."/>
            <person name="Braun M."/>
            <person name="Brignell S.C."/>
            <person name="Bron S."/>
            <person name="Brouillet S."/>
            <person name="Bruschi C.V."/>
            <person name="Caldwell B."/>
            <person name="Capuano V."/>
            <person name="Carter N.M."/>
            <person name="Choi S.-K."/>
            <person name="Codani J.-J."/>
            <person name="Connerton I.F."/>
            <person name="Cummings N.J."/>
            <person name="Daniel R.A."/>
            <person name="Denizot F."/>
            <person name="Devine K.M."/>
            <person name="Duesterhoeft A."/>
            <person name="Ehrlich S.D."/>
            <person name="Emmerson P.T."/>
            <person name="Entian K.-D."/>
            <person name="Errington J."/>
            <person name="Fabret C."/>
            <person name="Ferrari E."/>
            <person name="Foulger D."/>
            <person name="Fritz C."/>
            <person name="Fujita M."/>
            <person name="Fujita Y."/>
            <person name="Fuma S."/>
            <person name="Galizzi A."/>
            <person name="Galleron N."/>
            <person name="Ghim S.-Y."/>
            <person name="Glaser P."/>
            <person name="Goffeau A."/>
            <person name="Golightly E.J."/>
            <person name="Grandi G."/>
            <person name="Guiseppi G."/>
            <person name="Guy B.J."/>
            <person name="Haga K."/>
            <person name="Haiech J."/>
            <person name="Harwood C.R."/>
            <person name="Henaut A."/>
            <person name="Hilbert H."/>
            <person name="Holsappel S."/>
            <person name="Hosono S."/>
            <person name="Hullo M.-F."/>
            <person name="Itaya M."/>
            <person name="Jones L.-M."/>
            <person name="Joris B."/>
            <person name="Karamata D."/>
            <person name="Kasahara Y."/>
            <person name="Klaerr-Blanchard M."/>
            <person name="Klein C."/>
            <person name="Kobayashi Y."/>
            <person name="Koetter P."/>
            <person name="Koningstein G."/>
            <person name="Krogh S."/>
            <person name="Kumano M."/>
            <person name="Kurita K."/>
            <person name="Lapidus A."/>
            <person name="Lardinois S."/>
            <person name="Lauber J."/>
            <person name="Lazarevic V."/>
            <person name="Lee S.-M."/>
            <person name="Levine A."/>
            <person name="Liu H."/>
            <person name="Masuda S."/>
            <person name="Mauel C."/>
            <person name="Medigue C."/>
            <person name="Medina N."/>
            <person name="Mellado R.P."/>
            <person name="Mizuno M."/>
            <person name="Moestl D."/>
            <person name="Nakai S."/>
            <person name="Noback M."/>
            <person name="Noone D."/>
            <person name="O'Reilly M."/>
            <person name="Ogawa K."/>
            <person name="Ogiwara A."/>
            <person name="Oudega B."/>
            <person name="Park S.-H."/>
            <person name="Parro V."/>
            <person name="Pohl T.M."/>
            <person name="Portetelle D."/>
            <person name="Porwollik S."/>
            <person name="Prescott A.M."/>
            <person name="Presecan E."/>
            <person name="Pujic P."/>
            <person name="Purnelle B."/>
            <person name="Rapoport G."/>
            <person name="Rey M."/>
            <person name="Reynolds S."/>
            <person name="Rieger M."/>
            <person name="Rivolta C."/>
            <person name="Rocha E."/>
            <person name="Roche B."/>
            <person name="Rose M."/>
            <person name="Sadaie Y."/>
            <person name="Sato T."/>
            <person name="Scanlan E."/>
            <person name="Schleich S."/>
            <person name="Schroeter R."/>
            <person name="Scoffone F."/>
            <person name="Sekiguchi J."/>
            <person name="Sekowska A."/>
            <person name="Seror S.J."/>
            <person name="Serror P."/>
            <person name="Shin B.-S."/>
            <person name="Soldo B."/>
            <person name="Sorokin A."/>
            <person name="Tacconi E."/>
            <person name="Takagi T."/>
            <person name="Takahashi H."/>
            <person name="Takemaru K."/>
            <person name="Takeuchi M."/>
            <person name="Tamakoshi A."/>
            <person name="Tanaka T."/>
            <person name="Terpstra P."/>
            <person name="Tognoni A."/>
            <person name="Tosato V."/>
            <person name="Uchiyama S."/>
            <person name="Vandenbol M."/>
            <person name="Vannier F."/>
            <person name="Vassarotti A."/>
            <person name="Viari A."/>
            <person name="Wambutt R."/>
            <person name="Wedler E."/>
            <person name="Wedler H."/>
            <person name="Weitzenegger T."/>
            <person name="Winters P."/>
            <person name="Wipat A."/>
            <person name="Yamamoto H."/>
            <person name="Yamane K."/>
            <person name="Yasumoto K."/>
            <person name="Yata K."/>
            <person name="Yoshida K."/>
            <person name="Yoshikawa H.-F."/>
            <person name="Zumstein E."/>
            <person name="Yoshikawa H."/>
            <person name="Danchin A."/>
        </authorList>
    </citation>
    <scope>NUCLEOTIDE SEQUENCE [LARGE SCALE GENOMIC DNA]</scope>
    <source>
        <strain>168</strain>
    </source>
</reference>
<gene>
    <name type="primary">cotZ</name>
    <name type="ordered locus">BSU11740</name>
</gene>